<accession>A9VPC3</accession>
<comment type="function">
    <text evidence="1">Catalyzes the conversion of glucosamine-6-phosphate to glucosamine-1-phosphate.</text>
</comment>
<comment type="catalytic activity">
    <reaction evidence="1">
        <text>alpha-D-glucosamine 1-phosphate = D-glucosamine 6-phosphate</text>
        <dbReference type="Rhea" id="RHEA:23424"/>
        <dbReference type="ChEBI" id="CHEBI:58516"/>
        <dbReference type="ChEBI" id="CHEBI:58725"/>
        <dbReference type="EC" id="5.4.2.10"/>
    </reaction>
</comment>
<comment type="cofactor">
    <cofactor evidence="1">
        <name>Mg(2+)</name>
        <dbReference type="ChEBI" id="CHEBI:18420"/>
    </cofactor>
    <text evidence="1">Binds 1 Mg(2+) ion per subunit.</text>
</comment>
<comment type="PTM">
    <text evidence="1">Activated by phosphorylation.</text>
</comment>
<comment type="similarity">
    <text evidence="1">Belongs to the phosphohexose mutase family.</text>
</comment>
<reference key="1">
    <citation type="journal article" date="2008" name="Chem. Biol. Interact.">
        <title>Extending the Bacillus cereus group genomics to putative food-borne pathogens of different toxicity.</title>
        <authorList>
            <person name="Lapidus A."/>
            <person name="Goltsman E."/>
            <person name="Auger S."/>
            <person name="Galleron N."/>
            <person name="Segurens B."/>
            <person name="Dossat C."/>
            <person name="Land M.L."/>
            <person name="Broussolle V."/>
            <person name="Brillard J."/>
            <person name="Guinebretiere M.-H."/>
            <person name="Sanchis V."/>
            <person name="Nguen-the C."/>
            <person name="Lereclus D."/>
            <person name="Richardson P."/>
            <person name="Wincker P."/>
            <person name="Weissenbach J."/>
            <person name="Ehrlich S.D."/>
            <person name="Sorokin A."/>
        </authorList>
    </citation>
    <scope>NUCLEOTIDE SEQUENCE [LARGE SCALE GENOMIC DNA]</scope>
    <source>
        <strain>KBAB4</strain>
    </source>
</reference>
<sequence length="448" mass="48358">MGKYFGTDGVRGVANKELTPELAFKIGRFGGYVLTKDTDRPKVIIGRDTRVSGHMLEGALVAGLLSTGAEVMRLGVISTPGVAYLTKALGAQAGVMISASHNPVQDNGIKFFGSDGFKLTDEQEAEIEALLDKEVDELPRPTGTNLGQVSDYFEGGQKYLQYIKQTVEEDFSGLHIALDCAHGATSSLAPYLFADLEADISTMGTSPNGMNINAGVGSTHPEVLAELVKEKGADIGLAFDGDGDRLIAVDEKGNIVDGDQIMFICAKYMKETGQLKHNTVVSTVMSNLGFYKALEANNITSDKTAVGDRYVMEEMKRGGYNLGGEQSGHIILLDYITTGDGMLSALQLVNIMKMTKKPLSELAGEMTKFPQLLVNVRVTDKKLALENEKIKEIIRVVEEEMNGDGRILVRPSGTEPLIRVMAEAPTQEICDGYVHRIVEVVKAEVGAE</sequence>
<feature type="chain" id="PRO_1000201062" description="Phosphoglucosamine mutase">
    <location>
        <begin position="1"/>
        <end position="448"/>
    </location>
</feature>
<feature type="active site" description="Phosphoserine intermediate" evidence="1">
    <location>
        <position position="100"/>
    </location>
</feature>
<feature type="binding site" description="via phosphate group" evidence="1">
    <location>
        <position position="100"/>
    </location>
    <ligand>
        <name>Mg(2+)</name>
        <dbReference type="ChEBI" id="CHEBI:18420"/>
    </ligand>
</feature>
<feature type="binding site" evidence="1">
    <location>
        <position position="240"/>
    </location>
    <ligand>
        <name>Mg(2+)</name>
        <dbReference type="ChEBI" id="CHEBI:18420"/>
    </ligand>
</feature>
<feature type="binding site" evidence="1">
    <location>
        <position position="242"/>
    </location>
    <ligand>
        <name>Mg(2+)</name>
        <dbReference type="ChEBI" id="CHEBI:18420"/>
    </ligand>
</feature>
<feature type="binding site" evidence="1">
    <location>
        <position position="244"/>
    </location>
    <ligand>
        <name>Mg(2+)</name>
        <dbReference type="ChEBI" id="CHEBI:18420"/>
    </ligand>
</feature>
<feature type="modified residue" description="Phosphoserine" evidence="1">
    <location>
        <position position="100"/>
    </location>
</feature>
<gene>
    <name evidence="1" type="primary">glmM</name>
    <name type="ordered locus">BcerKBAB4_0151</name>
</gene>
<protein>
    <recommendedName>
        <fullName evidence="1">Phosphoglucosamine mutase</fullName>
        <ecNumber evidence="1">5.4.2.10</ecNumber>
    </recommendedName>
</protein>
<proteinExistence type="inferred from homology"/>
<dbReference type="EC" id="5.4.2.10" evidence="1"/>
<dbReference type="EMBL" id="CP000903">
    <property type="protein sequence ID" value="ABY41420.1"/>
    <property type="molecule type" value="Genomic_DNA"/>
</dbReference>
<dbReference type="RefSeq" id="WP_002029377.1">
    <property type="nucleotide sequence ID" value="NC_010184.1"/>
</dbReference>
<dbReference type="SMR" id="A9VPC3"/>
<dbReference type="GeneID" id="66264763"/>
<dbReference type="KEGG" id="bwe:BcerKBAB4_0151"/>
<dbReference type="eggNOG" id="COG1109">
    <property type="taxonomic scope" value="Bacteria"/>
</dbReference>
<dbReference type="HOGENOM" id="CLU_016950_7_0_9"/>
<dbReference type="Proteomes" id="UP000002154">
    <property type="component" value="Chromosome"/>
</dbReference>
<dbReference type="GO" id="GO:0005829">
    <property type="term" value="C:cytosol"/>
    <property type="evidence" value="ECO:0007669"/>
    <property type="project" value="TreeGrafter"/>
</dbReference>
<dbReference type="GO" id="GO:0000287">
    <property type="term" value="F:magnesium ion binding"/>
    <property type="evidence" value="ECO:0007669"/>
    <property type="project" value="UniProtKB-UniRule"/>
</dbReference>
<dbReference type="GO" id="GO:0008966">
    <property type="term" value="F:phosphoglucosamine mutase activity"/>
    <property type="evidence" value="ECO:0007669"/>
    <property type="project" value="UniProtKB-UniRule"/>
</dbReference>
<dbReference type="GO" id="GO:0004615">
    <property type="term" value="F:phosphomannomutase activity"/>
    <property type="evidence" value="ECO:0007669"/>
    <property type="project" value="TreeGrafter"/>
</dbReference>
<dbReference type="GO" id="GO:0005975">
    <property type="term" value="P:carbohydrate metabolic process"/>
    <property type="evidence" value="ECO:0007669"/>
    <property type="project" value="InterPro"/>
</dbReference>
<dbReference type="GO" id="GO:0009252">
    <property type="term" value="P:peptidoglycan biosynthetic process"/>
    <property type="evidence" value="ECO:0007669"/>
    <property type="project" value="TreeGrafter"/>
</dbReference>
<dbReference type="GO" id="GO:0006048">
    <property type="term" value="P:UDP-N-acetylglucosamine biosynthetic process"/>
    <property type="evidence" value="ECO:0007669"/>
    <property type="project" value="TreeGrafter"/>
</dbReference>
<dbReference type="CDD" id="cd05802">
    <property type="entry name" value="GlmM"/>
    <property type="match status" value="1"/>
</dbReference>
<dbReference type="FunFam" id="3.30.310.50:FF:000001">
    <property type="entry name" value="Phosphoglucosamine mutase"/>
    <property type="match status" value="1"/>
</dbReference>
<dbReference type="FunFam" id="3.40.120.10:FF:000001">
    <property type="entry name" value="Phosphoglucosamine mutase"/>
    <property type="match status" value="1"/>
</dbReference>
<dbReference type="FunFam" id="3.40.120.10:FF:000002">
    <property type="entry name" value="Phosphoglucosamine mutase"/>
    <property type="match status" value="1"/>
</dbReference>
<dbReference type="Gene3D" id="3.40.120.10">
    <property type="entry name" value="Alpha-D-Glucose-1,6-Bisphosphate, subunit A, domain 3"/>
    <property type="match status" value="3"/>
</dbReference>
<dbReference type="Gene3D" id="3.30.310.50">
    <property type="entry name" value="Alpha-D-phosphohexomutase, C-terminal domain"/>
    <property type="match status" value="1"/>
</dbReference>
<dbReference type="HAMAP" id="MF_01554_B">
    <property type="entry name" value="GlmM_B"/>
    <property type="match status" value="1"/>
</dbReference>
<dbReference type="InterPro" id="IPR005844">
    <property type="entry name" value="A-D-PHexomutase_a/b/a-I"/>
</dbReference>
<dbReference type="InterPro" id="IPR016055">
    <property type="entry name" value="A-D-PHexomutase_a/b/a-I/II/III"/>
</dbReference>
<dbReference type="InterPro" id="IPR005845">
    <property type="entry name" value="A-D-PHexomutase_a/b/a-II"/>
</dbReference>
<dbReference type="InterPro" id="IPR005846">
    <property type="entry name" value="A-D-PHexomutase_a/b/a-III"/>
</dbReference>
<dbReference type="InterPro" id="IPR005843">
    <property type="entry name" value="A-D-PHexomutase_C"/>
</dbReference>
<dbReference type="InterPro" id="IPR036900">
    <property type="entry name" value="A-D-PHexomutase_C_sf"/>
</dbReference>
<dbReference type="InterPro" id="IPR016066">
    <property type="entry name" value="A-D-PHexomutase_CS"/>
</dbReference>
<dbReference type="InterPro" id="IPR005841">
    <property type="entry name" value="Alpha-D-phosphohexomutase_SF"/>
</dbReference>
<dbReference type="InterPro" id="IPR006352">
    <property type="entry name" value="GlmM_bact"/>
</dbReference>
<dbReference type="InterPro" id="IPR050060">
    <property type="entry name" value="Phosphoglucosamine_mutase"/>
</dbReference>
<dbReference type="NCBIfam" id="TIGR01455">
    <property type="entry name" value="glmM"/>
    <property type="match status" value="1"/>
</dbReference>
<dbReference type="NCBIfam" id="NF008139">
    <property type="entry name" value="PRK10887.1"/>
    <property type="match status" value="1"/>
</dbReference>
<dbReference type="PANTHER" id="PTHR42946:SF1">
    <property type="entry name" value="PHOSPHOGLUCOMUTASE (ALPHA-D-GLUCOSE-1,6-BISPHOSPHATE-DEPENDENT)"/>
    <property type="match status" value="1"/>
</dbReference>
<dbReference type="PANTHER" id="PTHR42946">
    <property type="entry name" value="PHOSPHOHEXOSE MUTASE"/>
    <property type="match status" value="1"/>
</dbReference>
<dbReference type="Pfam" id="PF02878">
    <property type="entry name" value="PGM_PMM_I"/>
    <property type="match status" value="1"/>
</dbReference>
<dbReference type="Pfam" id="PF02879">
    <property type="entry name" value="PGM_PMM_II"/>
    <property type="match status" value="1"/>
</dbReference>
<dbReference type="Pfam" id="PF02880">
    <property type="entry name" value="PGM_PMM_III"/>
    <property type="match status" value="1"/>
</dbReference>
<dbReference type="Pfam" id="PF00408">
    <property type="entry name" value="PGM_PMM_IV"/>
    <property type="match status" value="1"/>
</dbReference>
<dbReference type="PRINTS" id="PR00509">
    <property type="entry name" value="PGMPMM"/>
</dbReference>
<dbReference type="SUPFAM" id="SSF55957">
    <property type="entry name" value="Phosphoglucomutase, C-terminal domain"/>
    <property type="match status" value="1"/>
</dbReference>
<dbReference type="SUPFAM" id="SSF53738">
    <property type="entry name" value="Phosphoglucomutase, first 3 domains"/>
    <property type="match status" value="3"/>
</dbReference>
<dbReference type="PROSITE" id="PS00710">
    <property type="entry name" value="PGM_PMM"/>
    <property type="match status" value="1"/>
</dbReference>
<evidence type="ECO:0000255" key="1">
    <source>
        <dbReference type="HAMAP-Rule" id="MF_01554"/>
    </source>
</evidence>
<organism>
    <name type="scientific">Bacillus mycoides (strain KBAB4)</name>
    <name type="common">Bacillus weihenstephanensis</name>
    <dbReference type="NCBI Taxonomy" id="315730"/>
    <lineage>
        <taxon>Bacteria</taxon>
        <taxon>Bacillati</taxon>
        <taxon>Bacillota</taxon>
        <taxon>Bacilli</taxon>
        <taxon>Bacillales</taxon>
        <taxon>Bacillaceae</taxon>
        <taxon>Bacillus</taxon>
        <taxon>Bacillus cereus group</taxon>
    </lineage>
</organism>
<name>GLMM_BACMK</name>
<keyword id="KW-0413">Isomerase</keyword>
<keyword id="KW-0460">Magnesium</keyword>
<keyword id="KW-0479">Metal-binding</keyword>
<keyword id="KW-0597">Phosphoprotein</keyword>